<gene>
    <name evidence="1" type="primary">secA</name>
    <name type="ordered locus">BCB4264_A5307</name>
</gene>
<accession>B7HEI8</accession>
<comment type="function">
    <text evidence="1">Part of the Sec protein translocase complex. Interacts with the SecYEG preprotein conducting channel. Has a central role in coupling the hydrolysis of ATP to the transfer of proteins into and across the cell membrane, serving as an ATP-driven molecular motor driving the stepwise translocation of polypeptide chains across the membrane.</text>
</comment>
<comment type="catalytic activity">
    <reaction evidence="1">
        <text>ATP + H2O + cellular proteinSide 1 = ADP + phosphate + cellular proteinSide 2.</text>
        <dbReference type="EC" id="7.4.2.8"/>
    </reaction>
</comment>
<comment type="cofactor">
    <cofactor evidence="1">
        <name>Zn(2+)</name>
        <dbReference type="ChEBI" id="CHEBI:29105"/>
    </cofactor>
    <text evidence="1">May bind 1 zinc ion per subunit.</text>
</comment>
<comment type="subunit">
    <text evidence="1">Monomer and homodimer. Part of the essential Sec protein translocation apparatus which comprises SecA, SecYEG and auxiliary proteins SecDF. Other proteins may also be involved.</text>
</comment>
<comment type="subcellular location">
    <subcellularLocation>
        <location evidence="1">Cell membrane</location>
        <topology evidence="1">Peripheral membrane protein</topology>
        <orientation evidence="1">Cytoplasmic side</orientation>
    </subcellularLocation>
    <subcellularLocation>
        <location evidence="1">Cytoplasm</location>
    </subcellularLocation>
    <text evidence="1">Distribution is 50-50.</text>
</comment>
<comment type="similarity">
    <text evidence="1">Belongs to the SecA family.</text>
</comment>
<name>SECA_BACC4</name>
<sequence>MIGILKKVFDVNQRQIKRMQKTVEQIDALESSIKPLTDEQLKGKTLEFKERLTKGETVDDLLPEAFAVVREAATRVLGMRPYGVQLMGGIALHEGNISEMKTGEGKTLTSTLPVYLNALTGKGVHVVTVNEYLAQRDASEMGQLHEFLGLTVGINLNSMSREEKQEAYAADITYSTNNELGFDYLRDNMVLYKEQCVQRPLHFAIIDEVDSILVDEARTPLIISGQAQKSTELYMFANAFVRTLENEKDYSFDVKTKNVMLTEDGITKAEKAFHIENLFDLKHVALLHHINQGLRAHVVMHRDTDYVVQEGEIVIVDQFTGRLMKGRRYSEGLHQAIEAKEGVEIQNESMTLATITFQNYFRMYEKLSGMTGTAKTEEEEFRNIYNMNVIVIPTNKPIIRDDRADLIFKSMEGKFNAVVEDIVNRHKKGQPVLVGTVAIETSELISKMLTRKGVRHNILNAKNHAREADIIAEAGIKGAVTIATNMAGRGTDIKLGDDVKNVGLAVIGTERHESRRIDNQLRGRAGRQGDPGVTQFYLSMEDELMRRFGSDNMKAMMDRLGMDDSQPIESKMVSRAVESAQKRVEGNNYDARKQLLQYDDVLRQQREVIYKQRQEVMESDNLRGIIEGMMKSTVERAVALHTQEEIEEDWNIKGLVDYLNTNLLQDGDVKEEELRRLAPEEMSEPIIAKLIERYNEKEKLMPEEQMREFEKVVVFRVVDTKWTEHIDAMDHLREGIHLRAYGQIDPLREYQMEGFAMFESMVASIEEEISRYIMKAEIEQNLERQEVVQGEAVHPSSDGEEAKKKPVVKGDQVGRNDLCKCGSGKKYKNCCGIVQ</sequence>
<evidence type="ECO:0000255" key="1">
    <source>
        <dbReference type="HAMAP-Rule" id="MF_01382"/>
    </source>
</evidence>
<evidence type="ECO:0000256" key="2">
    <source>
        <dbReference type="SAM" id="MobiDB-lite"/>
    </source>
</evidence>
<keyword id="KW-0067">ATP-binding</keyword>
<keyword id="KW-1003">Cell membrane</keyword>
<keyword id="KW-0963">Cytoplasm</keyword>
<keyword id="KW-0472">Membrane</keyword>
<keyword id="KW-0479">Metal-binding</keyword>
<keyword id="KW-0547">Nucleotide-binding</keyword>
<keyword id="KW-0653">Protein transport</keyword>
<keyword id="KW-1278">Translocase</keyword>
<keyword id="KW-0811">Translocation</keyword>
<keyword id="KW-0813">Transport</keyword>
<keyword id="KW-0862">Zinc</keyword>
<feature type="chain" id="PRO_1000144975" description="Protein translocase subunit SecA">
    <location>
        <begin position="1"/>
        <end position="835"/>
    </location>
</feature>
<feature type="region of interest" description="Disordered" evidence="2">
    <location>
        <begin position="788"/>
        <end position="807"/>
    </location>
</feature>
<feature type="binding site" evidence="1">
    <location>
        <position position="85"/>
    </location>
    <ligand>
        <name>ATP</name>
        <dbReference type="ChEBI" id="CHEBI:30616"/>
    </ligand>
</feature>
<feature type="binding site" evidence="1">
    <location>
        <begin position="103"/>
        <end position="107"/>
    </location>
    <ligand>
        <name>ATP</name>
        <dbReference type="ChEBI" id="CHEBI:30616"/>
    </ligand>
</feature>
<feature type="binding site" evidence="1">
    <location>
        <position position="492"/>
    </location>
    <ligand>
        <name>ATP</name>
        <dbReference type="ChEBI" id="CHEBI:30616"/>
    </ligand>
</feature>
<feature type="binding site" evidence="1">
    <location>
        <position position="819"/>
    </location>
    <ligand>
        <name>Zn(2+)</name>
        <dbReference type="ChEBI" id="CHEBI:29105"/>
    </ligand>
</feature>
<feature type="binding site" evidence="1">
    <location>
        <position position="821"/>
    </location>
    <ligand>
        <name>Zn(2+)</name>
        <dbReference type="ChEBI" id="CHEBI:29105"/>
    </ligand>
</feature>
<feature type="binding site" evidence="1">
    <location>
        <position position="830"/>
    </location>
    <ligand>
        <name>Zn(2+)</name>
        <dbReference type="ChEBI" id="CHEBI:29105"/>
    </ligand>
</feature>
<feature type="binding site" evidence="1">
    <location>
        <position position="831"/>
    </location>
    <ligand>
        <name>Zn(2+)</name>
        <dbReference type="ChEBI" id="CHEBI:29105"/>
    </ligand>
</feature>
<organism>
    <name type="scientific">Bacillus cereus (strain B4264)</name>
    <dbReference type="NCBI Taxonomy" id="405532"/>
    <lineage>
        <taxon>Bacteria</taxon>
        <taxon>Bacillati</taxon>
        <taxon>Bacillota</taxon>
        <taxon>Bacilli</taxon>
        <taxon>Bacillales</taxon>
        <taxon>Bacillaceae</taxon>
        <taxon>Bacillus</taxon>
        <taxon>Bacillus cereus group</taxon>
    </lineage>
</organism>
<proteinExistence type="inferred from homology"/>
<dbReference type="EC" id="7.4.2.8" evidence="1"/>
<dbReference type="EMBL" id="CP001176">
    <property type="protein sequence ID" value="ACK61631.1"/>
    <property type="molecule type" value="Genomic_DNA"/>
</dbReference>
<dbReference type="RefSeq" id="WP_000579385.1">
    <property type="nucleotide sequence ID" value="NZ_VEHB01000004.1"/>
</dbReference>
<dbReference type="SMR" id="B7HEI8"/>
<dbReference type="KEGG" id="bcb:BCB4264_A5307"/>
<dbReference type="HOGENOM" id="CLU_005314_3_0_9"/>
<dbReference type="Proteomes" id="UP000007096">
    <property type="component" value="Chromosome"/>
</dbReference>
<dbReference type="GO" id="GO:0031522">
    <property type="term" value="C:cell envelope Sec protein transport complex"/>
    <property type="evidence" value="ECO:0007669"/>
    <property type="project" value="TreeGrafter"/>
</dbReference>
<dbReference type="GO" id="GO:0005829">
    <property type="term" value="C:cytosol"/>
    <property type="evidence" value="ECO:0007669"/>
    <property type="project" value="TreeGrafter"/>
</dbReference>
<dbReference type="GO" id="GO:0005886">
    <property type="term" value="C:plasma membrane"/>
    <property type="evidence" value="ECO:0007669"/>
    <property type="project" value="UniProtKB-SubCell"/>
</dbReference>
<dbReference type="GO" id="GO:0005524">
    <property type="term" value="F:ATP binding"/>
    <property type="evidence" value="ECO:0007669"/>
    <property type="project" value="UniProtKB-UniRule"/>
</dbReference>
<dbReference type="GO" id="GO:0046872">
    <property type="term" value="F:metal ion binding"/>
    <property type="evidence" value="ECO:0007669"/>
    <property type="project" value="UniProtKB-KW"/>
</dbReference>
<dbReference type="GO" id="GO:0008564">
    <property type="term" value="F:protein-exporting ATPase activity"/>
    <property type="evidence" value="ECO:0007669"/>
    <property type="project" value="UniProtKB-EC"/>
</dbReference>
<dbReference type="GO" id="GO:0065002">
    <property type="term" value="P:intracellular protein transmembrane transport"/>
    <property type="evidence" value="ECO:0007669"/>
    <property type="project" value="UniProtKB-UniRule"/>
</dbReference>
<dbReference type="GO" id="GO:0017038">
    <property type="term" value="P:protein import"/>
    <property type="evidence" value="ECO:0007669"/>
    <property type="project" value="InterPro"/>
</dbReference>
<dbReference type="GO" id="GO:0006605">
    <property type="term" value="P:protein targeting"/>
    <property type="evidence" value="ECO:0007669"/>
    <property type="project" value="UniProtKB-UniRule"/>
</dbReference>
<dbReference type="GO" id="GO:0043952">
    <property type="term" value="P:protein transport by the Sec complex"/>
    <property type="evidence" value="ECO:0007669"/>
    <property type="project" value="TreeGrafter"/>
</dbReference>
<dbReference type="CDD" id="cd17928">
    <property type="entry name" value="DEXDc_SecA"/>
    <property type="match status" value="1"/>
</dbReference>
<dbReference type="CDD" id="cd18803">
    <property type="entry name" value="SF2_C_secA"/>
    <property type="match status" value="1"/>
</dbReference>
<dbReference type="FunFam" id="1.10.3060.10:FF:000002">
    <property type="entry name" value="Preprotein translocase subunit SecA"/>
    <property type="match status" value="1"/>
</dbReference>
<dbReference type="FunFam" id="3.40.50.300:FF:000081">
    <property type="entry name" value="Preprotein translocase subunit SecA"/>
    <property type="match status" value="1"/>
</dbReference>
<dbReference type="FunFam" id="3.40.50.300:FF:000429">
    <property type="entry name" value="Preprotein translocase subunit SecA"/>
    <property type="match status" value="1"/>
</dbReference>
<dbReference type="FunFam" id="3.90.1440.10:FF:000001">
    <property type="entry name" value="Preprotein translocase subunit SecA"/>
    <property type="match status" value="1"/>
</dbReference>
<dbReference type="Gene3D" id="1.10.3060.10">
    <property type="entry name" value="Helical scaffold and wing domains of SecA"/>
    <property type="match status" value="1"/>
</dbReference>
<dbReference type="Gene3D" id="3.40.50.300">
    <property type="entry name" value="P-loop containing nucleotide triphosphate hydrolases"/>
    <property type="match status" value="3"/>
</dbReference>
<dbReference type="Gene3D" id="3.90.1440.10">
    <property type="entry name" value="SecA, preprotein cross-linking domain"/>
    <property type="match status" value="1"/>
</dbReference>
<dbReference type="HAMAP" id="MF_01382">
    <property type="entry name" value="SecA"/>
    <property type="match status" value="1"/>
</dbReference>
<dbReference type="InterPro" id="IPR014001">
    <property type="entry name" value="Helicase_ATP-bd"/>
</dbReference>
<dbReference type="InterPro" id="IPR001650">
    <property type="entry name" value="Helicase_C-like"/>
</dbReference>
<dbReference type="InterPro" id="IPR027417">
    <property type="entry name" value="P-loop_NTPase"/>
</dbReference>
<dbReference type="InterPro" id="IPR004027">
    <property type="entry name" value="SEC_C_motif"/>
</dbReference>
<dbReference type="InterPro" id="IPR000185">
    <property type="entry name" value="SecA"/>
</dbReference>
<dbReference type="InterPro" id="IPR020937">
    <property type="entry name" value="SecA_CS"/>
</dbReference>
<dbReference type="InterPro" id="IPR011115">
    <property type="entry name" value="SecA_DEAD"/>
</dbReference>
<dbReference type="InterPro" id="IPR014018">
    <property type="entry name" value="SecA_motor_DEAD"/>
</dbReference>
<dbReference type="InterPro" id="IPR011130">
    <property type="entry name" value="SecA_preprotein_X-link_dom"/>
</dbReference>
<dbReference type="InterPro" id="IPR044722">
    <property type="entry name" value="SecA_SF2_C"/>
</dbReference>
<dbReference type="InterPro" id="IPR011116">
    <property type="entry name" value="SecA_Wing/Scaffold"/>
</dbReference>
<dbReference type="InterPro" id="IPR036266">
    <property type="entry name" value="SecA_Wing/Scaffold_sf"/>
</dbReference>
<dbReference type="InterPro" id="IPR036670">
    <property type="entry name" value="SecA_X-link_sf"/>
</dbReference>
<dbReference type="NCBIfam" id="NF006630">
    <property type="entry name" value="PRK09200.1"/>
    <property type="match status" value="1"/>
</dbReference>
<dbReference type="NCBIfam" id="NF009538">
    <property type="entry name" value="PRK12904.1"/>
    <property type="match status" value="1"/>
</dbReference>
<dbReference type="NCBIfam" id="TIGR00963">
    <property type="entry name" value="secA"/>
    <property type="match status" value="1"/>
</dbReference>
<dbReference type="PANTHER" id="PTHR30612:SF0">
    <property type="entry name" value="CHLOROPLAST PROTEIN-TRANSPORTING ATPASE"/>
    <property type="match status" value="1"/>
</dbReference>
<dbReference type="PANTHER" id="PTHR30612">
    <property type="entry name" value="SECA INNER MEMBRANE COMPONENT OF SEC PROTEIN SECRETION SYSTEM"/>
    <property type="match status" value="1"/>
</dbReference>
<dbReference type="Pfam" id="PF21090">
    <property type="entry name" value="P-loop_SecA"/>
    <property type="match status" value="2"/>
</dbReference>
<dbReference type="Pfam" id="PF02810">
    <property type="entry name" value="SEC-C"/>
    <property type="match status" value="1"/>
</dbReference>
<dbReference type="Pfam" id="PF07517">
    <property type="entry name" value="SecA_DEAD"/>
    <property type="match status" value="1"/>
</dbReference>
<dbReference type="Pfam" id="PF01043">
    <property type="entry name" value="SecA_PP_bind"/>
    <property type="match status" value="1"/>
</dbReference>
<dbReference type="Pfam" id="PF07516">
    <property type="entry name" value="SecA_SW"/>
    <property type="match status" value="1"/>
</dbReference>
<dbReference type="PRINTS" id="PR00906">
    <property type="entry name" value="SECA"/>
</dbReference>
<dbReference type="SMART" id="SM00957">
    <property type="entry name" value="SecA_DEAD"/>
    <property type="match status" value="1"/>
</dbReference>
<dbReference type="SMART" id="SM00958">
    <property type="entry name" value="SecA_PP_bind"/>
    <property type="match status" value="1"/>
</dbReference>
<dbReference type="SUPFAM" id="SSF81886">
    <property type="entry name" value="Helical scaffold and wing domains of SecA"/>
    <property type="match status" value="1"/>
</dbReference>
<dbReference type="SUPFAM" id="SSF52540">
    <property type="entry name" value="P-loop containing nucleoside triphosphate hydrolases"/>
    <property type="match status" value="2"/>
</dbReference>
<dbReference type="SUPFAM" id="SSF81767">
    <property type="entry name" value="Pre-protein crosslinking domain of SecA"/>
    <property type="match status" value="1"/>
</dbReference>
<dbReference type="PROSITE" id="PS01312">
    <property type="entry name" value="SECA"/>
    <property type="match status" value="1"/>
</dbReference>
<dbReference type="PROSITE" id="PS51196">
    <property type="entry name" value="SECA_MOTOR_DEAD"/>
    <property type="match status" value="1"/>
</dbReference>
<reference key="1">
    <citation type="submission" date="2008-10" db="EMBL/GenBank/DDBJ databases">
        <title>Genome sequence of Bacillus cereus B4264.</title>
        <authorList>
            <person name="Dodson R.J."/>
            <person name="Durkin A.S."/>
            <person name="Rosovitz M.J."/>
            <person name="Rasko D.A."/>
            <person name="Hoffmaster A."/>
            <person name="Ravel J."/>
            <person name="Sutton G."/>
        </authorList>
    </citation>
    <scope>NUCLEOTIDE SEQUENCE [LARGE SCALE GENOMIC DNA]</scope>
    <source>
        <strain>B4264</strain>
    </source>
</reference>
<protein>
    <recommendedName>
        <fullName evidence="1">Protein translocase subunit SecA</fullName>
        <ecNumber evidence="1">7.4.2.8</ecNumber>
    </recommendedName>
</protein>